<keyword id="KW-0963">Cytoplasm</keyword>
<keyword id="KW-0501">Molybdenum cofactor biosynthesis</keyword>
<keyword id="KW-1185">Reference proteome</keyword>
<sequence>MQCWIRQTINFFRKTKNTEKLTALLQQKEDILAVEIPVSLVYNGISHAVMMCSPNNLEDFALGFSLTEGIINKPEDIYGIDVVEVCNGIEVQIELSSRKFMALKEHRRNLTGRTGCGICGTEQLNQVYKTFPKLDCTFQFDLNLLDSCLIDLQKNQLLGCKTGATHACAFFDLYGSMLAIYEDVGRHVALDKLLGWHAKSGKPRGFILASSRASYEMVQKTVACGVEMLVTISAATDLAVTMAEKHNLTLIGFAREGKGNIYSGHLRLHN</sequence>
<proteinExistence type="inferred from homology"/>
<name>FDHD_HAEIN</name>
<accession>P44449</accession>
<dbReference type="EMBL" id="L42023">
    <property type="protein sequence ID" value="AAC21684.1"/>
    <property type="molecule type" value="Genomic_DNA"/>
</dbReference>
<dbReference type="PIR" id="I64041">
    <property type="entry name" value="I64041"/>
</dbReference>
<dbReference type="RefSeq" id="NP_438178.1">
    <property type="nucleotide sequence ID" value="NC_000907.1"/>
</dbReference>
<dbReference type="SMR" id="P44449"/>
<dbReference type="STRING" id="71421.HI_0005"/>
<dbReference type="EnsemblBacteria" id="AAC21684">
    <property type="protein sequence ID" value="AAC21684"/>
    <property type="gene ID" value="HI_0005"/>
</dbReference>
<dbReference type="KEGG" id="hin:HI_0005"/>
<dbReference type="PATRIC" id="fig|71421.8.peg.5"/>
<dbReference type="eggNOG" id="COG1526">
    <property type="taxonomic scope" value="Bacteria"/>
</dbReference>
<dbReference type="HOGENOM" id="CLU_056887_2_0_6"/>
<dbReference type="OrthoDB" id="3197277at2"/>
<dbReference type="PhylomeDB" id="P44449"/>
<dbReference type="BioCyc" id="HINF71421:G1GJ1-5-MONOMER"/>
<dbReference type="Proteomes" id="UP000000579">
    <property type="component" value="Chromosome"/>
</dbReference>
<dbReference type="GO" id="GO:0005737">
    <property type="term" value="C:cytoplasm"/>
    <property type="evidence" value="ECO:0007669"/>
    <property type="project" value="UniProtKB-SubCell"/>
</dbReference>
<dbReference type="GO" id="GO:0097163">
    <property type="term" value="F:sulfur carrier activity"/>
    <property type="evidence" value="ECO:0007669"/>
    <property type="project" value="UniProtKB-UniRule"/>
</dbReference>
<dbReference type="GO" id="GO:0016783">
    <property type="term" value="F:sulfurtransferase activity"/>
    <property type="evidence" value="ECO:0007669"/>
    <property type="project" value="InterPro"/>
</dbReference>
<dbReference type="GO" id="GO:0006777">
    <property type="term" value="P:Mo-molybdopterin cofactor biosynthetic process"/>
    <property type="evidence" value="ECO:0007669"/>
    <property type="project" value="UniProtKB-UniRule"/>
</dbReference>
<dbReference type="Gene3D" id="3.10.20.10">
    <property type="match status" value="1"/>
</dbReference>
<dbReference type="Gene3D" id="3.40.140.10">
    <property type="entry name" value="Cytidine Deaminase, domain 2"/>
    <property type="match status" value="1"/>
</dbReference>
<dbReference type="HAMAP" id="MF_00187">
    <property type="entry name" value="FdhD"/>
    <property type="match status" value="1"/>
</dbReference>
<dbReference type="InterPro" id="IPR016193">
    <property type="entry name" value="Cytidine_deaminase-like"/>
</dbReference>
<dbReference type="InterPro" id="IPR003786">
    <property type="entry name" value="FdhD"/>
</dbReference>
<dbReference type="NCBIfam" id="TIGR00129">
    <property type="entry name" value="fdhD_narQ"/>
    <property type="match status" value="1"/>
</dbReference>
<dbReference type="PANTHER" id="PTHR30592">
    <property type="entry name" value="FORMATE DEHYDROGENASE"/>
    <property type="match status" value="1"/>
</dbReference>
<dbReference type="PANTHER" id="PTHR30592:SF1">
    <property type="entry name" value="SULFUR CARRIER PROTEIN FDHD"/>
    <property type="match status" value="1"/>
</dbReference>
<dbReference type="Pfam" id="PF02634">
    <property type="entry name" value="FdhD-NarQ"/>
    <property type="match status" value="1"/>
</dbReference>
<dbReference type="PIRSF" id="PIRSF015626">
    <property type="entry name" value="FdhD"/>
    <property type="match status" value="1"/>
</dbReference>
<dbReference type="SUPFAM" id="SSF53927">
    <property type="entry name" value="Cytidine deaminase-like"/>
    <property type="match status" value="1"/>
</dbReference>
<evidence type="ECO:0000255" key="1">
    <source>
        <dbReference type="HAMAP-Rule" id="MF_00187"/>
    </source>
</evidence>
<feature type="chain" id="PRO_0000152904" description="Sulfur carrier protein FdhD">
    <location>
        <begin position="1"/>
        <end position="270"/>
    </location>
</feature>
<feature type="active site" description="Cysteine persulfide intermediate" evidence="1">
    <location>
        <position position="116"/>
    </location>
</feature>
<feature type="binding site" evidence="1">
    <location>
        <begin position="253"/>
        <end position="258"/>
    </location>
    <ligand>
        <name>Mo-bis(molybdopterin guanine dinucleotide)</name>
        <dbReference type="ChEBI" id="CHEBI:60539"/>
    </ligand>
</feature>
<gene>
    <name evidence="1" type="primary">fdhD</name>
    <name type="ordered locus">HI_0005</name>
</gene>
<reference key="1">
    <citation type="journal article" date="1995" name="Science">
        <title>Whole-genome random sequencing and assembly of Haemophilus influenzae Rd.</title>
        <authorList>
            <person name="Fleischmann R.D."/>
            <person name="Adams M.D."/>
            <person name="White O."/>
            <person name="Clayton R.A."/>
            <person name="Kirkness E.F."/>
            <person name="Kerlavage A.R."/>
            <person name="Bult C.J."/>
            <person name="Tomb J.-F."/>
            <person name="Dougherty B.A."/>
            <person name="Merrick J.M."/>
            <person name="McKenney K."/>
            <person name="Sutton G.G."/>
            <person name="FitzHugh W."/>
            <person name="Fields C.A."/>
            <person name="Gocayne J.D."/>
            <person name="Scott J.D."/>
            <person name="Shirley R."/>
            <person name="Liu L.-I."/>
            <person name="Glodek A."/>
            <person name="Kelley J.M."/>
            <person name="Weidman J.F."/>
            <person name="Phillips C.A."/>
            <person name="Spriggs T."/>
            <person name="Hedblom E."/>
            <person name="Cotton M.D."/>
            <person name="Utterback T.R."/>
            <person name="Hanna M.C."/>
            <person name="Nguyen D.T."/>
            <person name="Saudek D.M."/>
            <person name="Brandon R.C."/>
            <person name="Fine L.D."/>
            <person name="Fritchman J.L."/>
            <person name="Fuhrmann J.L."/>
            <person name="Geoghagen N.S.M."/>
            <person name="Gnehm C.L."/>
            <person name="McDonald L.A."/>
            <person name="Small K.V."/>
            <person name="Fraser C.M."/>
            <person name="Smith H.O."/>
            <person name="Venter J.C."/>
        </authorList>
    </citation>
    <scope>NUCLEOTIDE SEQUENCE [LARGE SCALE GENOMIC DNA]</scope>
    <source>
        <strain>ATCC 51907 / DSM 11121 / KW20 / Rd</strain>
    </source>
</reference>
<comment type="function">
    <text evidence="1">Required for formate dehydrogenase (FDH) activity. Acts as a sulfur carrier protein that transfers sulfur from IscS to the molybdenum cofactor prior to its insertion into FDH.</text>
</comment>
<comment type="subcellular location">
    <subcellularLocation>
        <location evidence="1">Cytoplasm</location>
    </subcellularLocation>
</comment>
<comment type="similarity">
    <text evidence="1">Belongs to the FdhD family.</text>
</comment>
<protein>
    <recommendedName>
        <fullName evidence="1">Sulfur carrier protein FdhD</fullName>
    </recommendedName>
</protein>
<organism>
    <name type="scientific">Haemophilus influenzae (strain ATCC 51907 / DSM 11121 / KW20 / Rd)</name>
    <dbReference type="NCBI Taxonomy" id="71421"/>
    <lineage>
        <taxon>Bacteria</taxon>
        <taxon>Pseudomonadati</taxon>
        <taxon>Pseudomonadota</taxon>
        <taxon>Gammaproteobacteria</taxon>
        <taxon>Pasteurellales</taxon>
        <taxon>Pasteurellaceae</taxon>
        <taxon>Haemophilus</taxon>
    </lineage>
</organism>